<sequence length="468" mass="51118">MTLYRSLWKKGCMLLLSLVLSLTAFIGSPSNTASAAVADDIQASVMGPLAKINDWGSFKKQLQTLKNNGVYAITTDVWWGYVESAGDNQFDWSYYKTYADAVKEAGLKWVPIISTHKCGGNVGDDCNIPLPSWLSSKGSADEMQFKDESGYANNEALSPLWSGTGKQYDELYASFAQNFAGYKSIIPKIYLSGGPSGELRYPSYYPAAGWSYPGRGKFQAYTETAKNAFRTAMNDKYGSLDKINTAWGTKLTSLSQINPPTDGDGFYTNGGYNSAYGKDFLSWYQSVLEKHLGVIGAAAHKNFDSVFGVRIGAKISGLHWQMNNPAMPHSTEQAGGYYDYNRLIQKFKDADLDLTFTCLEMSDSGTAPNYSLPSTLVDTVSSIANAKGVRLNGENALQTGGSGFQKIEEKITKFGYHGFTLLRINNLVNNDGSPTGELSGFKQYIISKAKPDNNGGTGNKVTIYYKKG</sequence>
<reference key="1">
    <citation type="journal article" date="1998" name="Wei Sheng Wu Xue Bao">
        <title>Sequencing of a beta-amylase gene from Bacillus firmus.</title>
        <authorList>
            <person name="Chen W."/>
            <person name="He B."/>
            <person name="Lou X."/>
            <person name="Guan F."/>
            <person name="Ye C."/>
        </authorList>
    </citation>
    <scope>NUCLEOTIDE SEQUENCE [GENOMIC DNA]</scope>
    <source>
        <strain>725</strain>
    </source>
</reference>
<evidence type="ECO:0000250" key="1">
    <source>
        <dbReference type="UniProtKB" id="P36924"/>
    </source>
</evidence>
<evidence type="ECO:0000255" key="2"/>
<evidence type="ECO:0000255" key="3">
    <source>
        <dbReference type="PROSITE-ProRule" id="PRU10050"/>
    </source>
</evidence>
<evidence type="ECO:0000305" key="4"/>
<proteinExistence type="inferred from homology"/>
<protein>
    <recommendedName>
        <fullName>Beta-amylase</fullName>
        <ecNumber>3.2.1.2</ecNumber>
    </recommendedName>
    <alternativeName>
        <fullName>1,4-alpha-D-glucan maltohydrolase</fullName>
    </alternativeName>
</protein>
<feature type="signal peptide" evidence="2">
    <location>
        <begin position="1"/>
        <end position="36"/>
    </location>
</feature>
<feature type="chain" id="PRO_0000001455" description="Beta-amylase">
    <location>
        <begin position="37"/>
        <end position="468" status="greater than"/>
    </location>
</feature>
<feature type="active site" description="Proton donor" evidence="3">
    <location>
        <position position="198"/>
    </location>
</feature>
<feature type="active site" description="Proton acceptor" evidence="1">
    <location>
        <position position="394"/>
    </location>
</feature>
<feature type="binding site" evidence="1">
    <location>
        <position position="76"/>
    </location>
    <ligand>
        <name>substrate</name>
    </ligand>
</feature>
<feature type="binding site" evidence="1">
    <location>
        <position position="83"/>
    </location>
    <ligand>
        <name>Ca(2+)</name>
        <dbReference type="ChEBI" id="CHEBI:29108"/>
    </ligand>
</feature>
<feature type="binding site" evidence="1">
    <location>
        <position position="87"/>
    </location>
    <ligand>
        <name>Ca(2+)</name>
        <dbReference type="ChEBI" id="CHEBI:29108"/>
    </ligand>
</feature>
<feature type="binding site" evidence="1">
    <location>
        <position position="116"/>
    </location>
    <ligand>
        <name>substrate</name>
    </ligand>
</feature>
<feature type="binding site" evidence="1">
    <location>
        <position position="124"/>
    </location>
    <ligand>
        <name>substrate</name>
    </ligand>
</feature>
<feature type="binding site" evidence="1">
    <location>
        <position position="170"/>
    </location>
    <ligand>
        <name>Ca(2+)</name>
        <dbReference type="ChEBI" id="CHEBI:29108"/>
    </ligand>
</feature>
<feature type="binding site" evidence="1">
    <location>
        <position position="314"/>
    </location>
    <ligand>
        <name>substrate</name>
    </ligand>
</feature>
<feature type="binding site" evidence="1">
    <location>
        <position position="319"/>
    </location>
    <ligand>
        <name>substrate</name>
    </ligand>
</feature>
<feature type="binding site" evidence="1">
    <location>
        <position position="357"/>
    </location>
    <ligand>
        <name>substrate</name>
    </ligand>
</feature>
<feature type="binding site" evidence="1">
    <location>
        <begin position="395"/>
        <end position="396"/>
    </location>
    <ligand>
        <name>substrate</name>
    </ligand>
</feature>
<feature type="binding site" evidence="1">
    <location>
        <position position="423"/>
    </location>
    <ligand>
        <name>substrate</name>
    </ligand>
</feature>
<feature type="disulfide bond" evidence="1">
    <location>
        <begin position="118"/>
        <end position="126"/>
    </location>
</feature>
<feature type="non-terminal residue">
    <location>
        <position position="468"/>
    </location>
</feature>
<comment type="catalytic activity">
    <reaction>
        <text>Hydrolysis of (1-&gt;4)-alpha-D-glucosidic linkages in polysaccharides so as to remove successive maltose units from the non-reducing ends of the chains.</text>
        <dbReference type="EC" id="3.2.1.2"/>
    </reaction>
</comment>
<comment type="cofactor">
    <cofactor evidence="1">
        <name>Ca(2+)</name>
        <dbReference type="ChEBI" id="CHEBI:29108"/>
    </cofactor>
    <text evidence="1">Binds 1 Ca(2+) ion per subunit.</text>
</comment>
<comment type="similarity">
    <text evidence="4">Belongs to the glycosyl hydrolase 14 family.</text>
</comment>
<name>AMYB_CYTFI</name>
<dbReference type="EC" id="3.2.1.2"/>
<dbReference type="EMBL" id="AB000264">
    <property type="protein sequence ID" value="BAA19075.1"/>
    <property type="molecule type" value="Genomic_DNA"/>
</dbReference>
<dbReference type="SMR" id="P96513"/>
<dbReference type="CAZy" id="CBM25">
    <property type="family name" value="Carbohydrate-Binding Module Family 25"/>
</dbReference>
<dbReference type="CAZy" id="GH14">
    <property type="family name" value="Glycoside Hydrolase Family 14"/>
</dbReference>
<dbReference type="GO" id="GO:0016161">
    <property type="term" value="F:beta-amylase activity"/>
    <property type="evidence" value="ECO:0007669"/>
    <property type="project" value="UniProtKB-EC"/>
</dbReference>
<dbReference type="GO" id="GO:0046872">
    <property type="term" value="F:metal ion binding"/>
    <property type="evidence" value="ECO:0007669"/>
    <property type="project" value="UniProtKB-KW"/>
</dbReference>
<dbReference type="GO" id="GO:0000272">
    <property type="term" value="P:polysaccharide catabolic process"/>
    <property type="evidence" value="ECO:0007669"/>
    <property type="project" value="UniProtKB-KW"/>
</dbReference>
<dbReference type="Gene3D" id="3.20.20.80">
    <property type="entry name" value="Glycosidases"/>
    <property type="match status" value="1"/>
</dbReference>
<dbReference type="InterPro" id="IPR001554">
    <property type="entry name" value="Glyco_hydro_14"/>
</dbReference>
<dbReference type="InterPro" id="IPR018238">
    <property type="entry name" value="Glyco_hydro_14_CS"/>
</dbReference>
<dbReference type="InterPro" id="IPR000125">
    <property type="entry name" value="Glyco_hydro_14A_bac"/>
</dbReference>
<dbReference type="InterPro" id="IPR017853">
    <property type="entry name" value="Glycoside_hydrolase_SF"/>
</dbReference>
<dbReference type="PANTHER" id="PTHR31352">
    <property type="entry name" value="BETA-AMYLASE 1, CHLOROPLASTIC"/>
    <property type="match status" value="1"/>
</dbReference>
<dbReference type="PANTHER" id="PTHR31352:SF1">
    <property type="entry name" value="BETA-AMYLASE 3, CHLOROPLASTIC"/>
    <property type="match status" value="1"/>
</dbReference>
<dbReference type="Pfam" id="PF01373">
    <property type="entry name" value="Glyco_hydro_14"/>
    <property type="match status" value="1"/>
</dbReference>
<dbReference type="PRINTS" id="PR00750">
    <property type="entry name" value="BETAAMYLASE"/>
</dbReference>
<dbReference type="PRINTS" id="PR00841">
    <property type="entry name" value="GLHYDLASE14A"/>
</dbReference>
<dbReference type="SUPFAM" id="SSF51445">
    <property type="entry name" value="(Trans)glycosidases"/>
    <property type="match status" value="1"/>
</dbReference>
<dbReference type="PROSITE" id="PS00506">
    <property type="entry name" value="BETA_AMYLASE_1"/>
    <property type="match status" value="1"/>
</dbReference>
<dbReference type="PROSITE" id="PS00679">
    <property type="entry name" value="BETA_AMYLASE_2"/>
    <property type="match status" value="1"/>
</dbReference>
<accession>P96513</accession>
<keyword id="KW-0119">Carbohydrate metabolism</keyword>
<keyword id="KW-1015">Disulfide bond</keyword>
<keyword id="KW-0326">Glycosidase</keyword>
<keyword id="KW-0378">Hydrolase</keyword>
<keyword id="KW-0479">Metal-binding</keyword>
<keyword id="KW-0624">Polysaccharide degradation</keyword>
<keyword id="KW-0732">Signal</keyword>
<organism>
    <name type="scientific">Cytobacillus firmus</name>
    <name type="common">Bacillus firmus</name>
    <dbReference type="NCBI Taxonomy" id="1399"/>
    <lineage>
        <taxon>Bacteria</taxon>
        <taxon>Bacillati</taxon>
        <taxon>Bacillota</taxon>
        <taxon>Bacilli</taxon>
        <taxon>Bacillales</taxon>
        <taxon>Bacillaceae</taxon>
        <taxon>Cytobacillus</taxon>
    </lineage>
</organism>